<proteinExistence type="evidence at transcript level"/>
<evidence type="ECO:0000250" key="1"/>
<evidence type="ECO:0000250" key="2">
    <source>
        <dbReference type="UniProtKB" id="P0C247"/>
    </source>
</evidence>
<evidence type="ECO:0000255" key="3"/>
<evidence type="ECO:0000305" key="4"/>
<sequence length="86" mass="9703">MKVSVLITLAVLGVMFVWASAAELEQSGSDQKDSPAWLKSMERIFQSEERECRKMFGGCSKHEDCCAHLACKRTFNYCAWDGSFSK</sequence>
<comment type="function">
    <text>Probable ion channel inhibitor.</text>
</comment>
<comment type="subcellular location">
    <subcellularLocation>
        <location evidence="1">Secreted</location>
    </subcellularLocation>
</comment>
<comment type="tissue specificity">
    <text>Expressed by the venom gland.</text>
</comment>
<comment type="domain">
    <text evidence="2">The presence of a 'disulfide through disulfide knot' structurally defines this protein as a knottin.</text>
</comment>
<comment type="similarity">
    <text evidence="4">Belongs to the neurotoxin 10 (Hwtx-1) family. 41 (Jztx-36) subfamily.</text>
</comment>
<name>JZT37_CHIGU</name>
<dbReference type="EMBL" id="EU233869">
    <property type="protein sequence ID" value="ABY71688.1"/>
    <property type="molecule type" value="mRNA"/>
</dbReference>
<dbReference type="SMR" id="B1P1D8"/>
<dbReference type="ArachnoServer" id="AS000817">
    <property type="toxin name" value="U13-theraphotoxin-Cg1b"/>
</dbReference>
<dbReference type="GO" id="GO:0005576">
    <property type="term" value="C:extracellular region"/>
    <property type="evidence" value="ECO:0007669"/>
    <property type="project" value="UniProtKB-SubCell"/>
</dbReference>
<dbReference type="GO" id="GO:0008200">
    <property type="term" value="F:ion channel inhibitor activity"/>
    <property type="evidence" value="ECO:0007669"/>
    <property type="project" value="InterPro"/>
</dbReference>
<dbReference type="GO" id="GO:0090729">
    <property type="term" value="F:toxin activity"/>
    <property type="evidence" value="ECO:0007669"/>
    <property type="project" value="UniProtKB-KW"/>
</dbReference>
<dbReference type="InterPro" id="IPR011696">
    <property type="entry name" value="Huwentoxin-1"/>
</dbReference>
<dbReference type="Pfam" id="PF07740">
    <property type="entry name" value="Toxin_12"/>
    <property type="match status" value="1"/>
</dbReference>
<dbReference type="SUPFAM" id="SSF57059">
    <property type="entry name" value="omega toxin-like"/>
    <property type="match status" value="1"/>
</dbReference>
<keyword id="KW-1015">Disulfide bond</keyword>
<keyword id="KW-0872">Ion channel impairing toxin</keyword>
<keyword id="KW-0960">Knottin</keyword>
<keyword id="KW-0964">Secreted</keyword>
<keyword id="KW-0732">Signal</keyword>
<keyword id="KW-0800">Toxin</keyword>
<accession>B1P1D8</accession>
<protein>
    <recommendedName>
        <fullName>U13-theraphotoxin-Cg1b</fullName>
        <shortName>U13-TRTX-Cg1b</shortName>
    </recommendedName>
    <alternativeName>
        <fullName>Jingzhaotoxin-37</fullName>
        <shortName>JZTX-37</shortName>
    </alternativeName>
</protein>
<feature type="signal peptide" evidence="3">
    <location>
        <begin position="1"/>
        <end position="21"/>
    </location>
</feature>
<feature type="propeptide" id="PRO_0000398477" evidence="1">
    <location>
        <begin position="22"/>
        <end position="51"/>
    </location>
</feature>
<feature type="peptide" id="PRO_0000398478" description="U13-theraphotoxin-Cg1b">
    <location>
        <begin position="52"/>
        <end position="86"/>
    </location>
</feature>
<feature type="disulfide bond" evidence="2">
    <location>
        <begin position="52"/>
        <end position="66"/>
    </location>
</feature>
<feature type="disulfide bond" evidence="2">
    <location>
        <begin position="59"/>
        <end position="71"/>
    </location>
</feature>
<feature type="disulfide bond" evidence="2">
    <location>
        <begin position="65"/>
        <end position="78"/>
    </location>
</feature>
<reference key="1">
    <citation type="journal article" date="2008" name="Cell. Mol. Life Sci.">
        <title>Molecular diversity and evolution of cystine knot toxins of the tarantula Chilobrachys jingzhao.</title>
        <authorList>
            <person name="Chen J."/>
            <person name="Deng M."/>
            <person name="He Q."/>
            <person name="Meng E."/>
            <person name="Jiang L."/>
            <person name="Liao Z."/>
            <person name="Rong M."/>
            <person name="Liang S."/>
        </authorList>
    </citation>
    <scope>NUCLEOTIDE SEQUENCE [LARGE SCALE MRNA]</scope>
    <source>
        <tissue>Venom gland</tissue>
    </source>
</reference>
<organism>
    <name type="scientific">Chilobrachys guangxiensis</name>
    <name type="common">Chinese earth tiger tarantula</name>
    <name type="synonym">Chilobrachys jingzhao</name>
    <dbReference type="NCBI Taxonomy" id="278060"/>
    <lineage>
        <taxon>Eukaryota</taxon>
        <taxon>Metazoa</taxon>
        <taxon>Ecdysozoa</taxon>
        <taxon>Arthropoda</taxon>
        <taxon>Chelicerata</taxon>
        <taxon>Arachnida</taxon>
        <taxon>Araneae</taxon>
        <taxon>Mygalomorphae</taxon>
        <taxon>Theraphosidae</taxon>
        <taxon>Chilobrachys</taxon>
    </lineage>
</organism>